<dbReference type="EMBL" id="CP000961">
    <property type="protein sequence ID" value="ACA84601.1"/>
    <property type="molecule type" value="Genomic_DNA"/>
</dbReference>
<dbReference type="RefSeq" id="WP_012322950.1">
    <property type="nucleotide sequence ID" value="NC_010506.1"/>
</dbReference>
<dbReference type="SMR" id="B1KNA4"/>
<dbReference type="STRING" id="392500.Swoo_0300"/>
<dbReference type="KEGG" id="swd:Swoo_0300"/>
<dbReference type="eggNOG" id="COG3024">
    <property type="taxonomic scope" value="Bacteria"/>
</dbReference>
<dbReference type="HOGENOM" id="CLU_178280_1_0_6"/>
<dbReference type="Proteomes" id="UP000002168">
    <property type="component" value="Chromosome"/>
</dbReference>
<dbReference type="GO" id="GO:0008657">
    <property type="term" value="F:DNA topoisomerase type II (double strand cut, ATP-hydrolyzing) inhibitor activity"/>
    <property type="evidence" value="ECO:0007669"/>
    <property type="project" value="UniProtKB-UniRule"/>
</dbReference>
<dbReference type="GO" id="GO:0008270">
    <property type="term" value="F:zinc ion binding"/>
    <property type="evidence" value="ECO:0007669"/>
    <property type="project" value="UniProtKB-UniRule"/>
</dbReference>
<dbReference type="GO" id="GO:0006355">
    <property type="term" value="P:regulation of DNA-templated transcription"/>
    <property type="evidence" value="ECO:0007669"/>
    <property type="project" value="InterPro"/>
</dbReference>
<dbReference type="Gene3D" id="3.30.50.10">
    <property type="entry name" value="Erythroid Transcription Factor GATA-1, subunit A"/>
    <property type="match status" value="1"/>
</dbReference>
<dbReference type="HAMAP" id="MF_00649">
    <property type="entry name" value="DNA_gyrase_inhibitor_YacG"/>
    <property type="match status" value="1"/>
</dbReference>
<dbReference type="InterPro" id="IPR005584">
    <property type="entry name" value="DNA_gyrase_inhibitor_YacG"/>
</dbReference>
<dbReference type="InterPro" id="IPR013088">
    <property type="entry name" value="Znf_NHR/GATA"/>
</dbReference>
<dbReference type="NCBIfam" id="NF001638">
    <property type="entry name" value="PRK00418.1"/>
    <property type="match status" value="1"/>
</dbReference>
<dbReference type="PANTHER" id="PTHR36150">
    <property type="entry name" value="DNA GYRASE INHIBITOR YACG"/>
    <property type="match status" value="1"/>
</dbReference>
<dbReference type="PANTHER" id="PTHR36150:SF1">
    <property type="entry name" value="DNA GYRASE INHIBITOR YACG"/>
    <property type="match status" value="1"/>
</dbReference>
<dbReference type="Pfam" id="PF03884">
    <property type="entry name" value="YacG"/>
    <property type="match status" value="1"/>
</dbReference>
<dbReference type="SUPFAM" id="SSF57716">
    <property type="entry name" value="Glucocorticoid receptor-like (DNA-binding domain)"/>
    <property type="match status" value="1"/>
</dbReference>
<comment type="function">
    <text evidence="1">Inhibits all the catalytic activities of DNA gyrase by preventing its interaction with DNA. Acts by binding directly to the C-terminal domain of GyrB, which probably disrupts DNA binding by the gyrase.</text>
</comment>
<comment type="cofactor">
    <cofactor evidence="1">
        <name>Zn(2+)</name>
        <dbReference type="ChEBI" id="CHEBI:29105"/>
    </cofactor>
    <text evidence="1">Binds 1 zinc ion.</text>
</comment>
<comment type="subunit">
    <text evidence="1">Interacts with GyrB.</text>
</comment>
<comment type="similarity">
    <text evidence="1">Belongs to the DNA gyrase inhibitor YacG family.</text>
</comment>
<proteinExistence type="inferred from homology"/>
<name>YACG_SHEWM</name>
<keyword id="KW-0479">Metal-binding</keyword>
<keyword id="KW-1185">Reference proteome</keyword>
<keyword id="KW-0862">Zinc</keyword>
<sequence length="70" mass="8087">MPTSVKCPTCQKDVIWNNESKFKPFCCERCKLIDLGDWASEKHAIPVKPEFDADDLDNLGYDEADFFKEN</sequence>
<accession>B1KNA4</accession>
<gene>
    <name evidence="1" type="primary">yacG</name>
    <name type="ordered locus">Swoo_0300</name>
</gene>
<protein>
    <recommendedName>
        <fullName evidence="1">DNA gyrase inhibitor YacG</fullName>
    </recommendedName>
</protein>
<reference key="1">
    <citation type="submission" date="2008-02" db="EMBL/GenBank/DDBJ databases">
        <title>Complete sequence of Shewanella woodyi ATCC 51908.</title>
        <authorList>
            <consortium name="US DOE Joint Genome Institute"/>
            <person name="Copeland A."/>
            <person name="Lucas S."/>
            <person name="Lapidus A."/>
            <person name="Glavina del Rio T."/>
            <person name="Dalin E."/>
            <person name="Tice H."/>
            <person name="Bruce D."/>
            <person name="Goodwin L."/>
            <person name="Pitluck S."/>
            <person name="Sims D."/>
            <person name="Brettin T."/>
            <person name="Detter J.C."/>
            <person name="Han C."/>
            <person name="Kuske C.R."/>
            <person name="Schmutz J."/>
            <person name="Larimer F."/>
            <person name="Land M."/>
            <person name="Hauser L."/>
            <person name="Kyrpides N."/>
            <person name="Lykidis A."/>
            <person name="Zhao J.-S."/>
            <person name="Richardson P."/>
        </authorList>
    </citation>
    <scope>NUCLEOTIDE SEQUENCE [LARGE SCALE GENOMIC DNA]</scope>
    <source>
        <strain>ATCC 51908 / MS32</strain>
    </source>
</reference>
<organism>
    <name type="scientific">Shewanella woodyi (strain ATCC 51908 / MS32)</name>
    <dbReference type="NCBI Taxonomy" id="392500"/>
    <lineage>
        <taxon>Bacteria</taxon>
        <taxon>Pseudomonadati</taxon>
        <taxon>Pseudomonadota</taxon>
        <taxon>Gammaproteobacteria</taxon>
        <taxon>Alteromonadales</taxon>
        <taxon>Shewanellaceae</taxon>
        <taxon>Shewanella</taxon>
    </lineage>
</organism>
<feature type="chain" id="PRO_1000130980" description="DNA gyrase inhibitor YacG">
    <location>
        <begin position="1"/>
        <end position="70"/>
    </location>
</feature>
<feature type="binding site" evidence="1">
    <location>
        <position position="7"/>
    </location>
    <ligand>
        <name>Zn(2+)</name>
        <dbReference type="ChEBI" id="CHEBI:29105"/>
    </ligand>
</feature>
<feature type="binding site" evidence="1">
    <location>
        <position position="10"/>
    </location>
    <ligand>
        <name>Zn(2+)</name>
        <dbReference type="ChEBI" id="CHEBI:29105"/>
    </ligand>
</feature>
<feature type="binding site" evidence="1">
    <location>
        <position position="26"/>
    </location>
    <ligand>
        <name>Zn(2+)</name>
        <dbReference type="ChEBI" id="CHEBI:29105"/>
    </ligand>
</feature>
<feature type="binding site" evidence="1">
    <location>
        <position position="30"/>
    </location>
    <ligand>
        <name>Zn(2+)</name>
        <dbReference type="ChEBI" id="CHEBI:29105"/>
    </ligand>
</feature>
<evidence type="ECO:0000255" key="1">
    <source>
        <dbReference type="HAMAP-Rule" id="MF_00649"/>
    </source>
</evidence>